<dbReference type="EMBL" id="CP000947">
    <property type="protein sequence ID" value="ACA32185.1"/>
    <property type="molecule type" value="Genomic_DNA"/>
</dbReference>
<dbReference type="RefSeq" id="WP_012341369.1">
    <property type="nucleotide sequence ID" value="NC_010519.1"/>
</dbReference>
<dbReference type="SMR" id="B0URX9"/>
<dbReference type="STRING" id="228400.HSM_0534"/>
<dbReference type="GeneID" id="31486809"/>
<dbReference type="KEGG" id="hsm:HSM_0534"/>
<dbReference type="HOGENOM" id="CLU_035023_3_1_6"/>
<dbReference type="GO" id="GO:0005886">
    <property type="term" value="C:plasma membrane"/>
    <property type="evidence" value="ECO:0007669"/>
    <property type="project" value="UniProtKB-SubCell"/>
</dbReference>
<dbReference type="GO" id="GO:0008324">
    <property type="term" value="F:monoatomic cation transmembrane transporter activity"/>
    <property type="evidence" value="ECO:0007669"/>
    <property type="project" value="InterPro"/>
</dbReference>
<dbReference type="GO" id="GO:0006813">
    <property type="term" value="P:potassium ion transport"/>
    <property type="evidence" value="ECO:0007669"/>
    <property type="project" value="InterPro"/>
</dbReference>
<dbReference type="Gene3D" id="3.30.70.1450">
    <property type="entry name" value="Regulator of K+ conductance, C-terminal domain"/>
    <property type="match status" value="2"/>
</dbReference>
<dbReference type="HAMAP" id="MF_01016">
    <property type="entry name" value="YidE"/>
    <property type="match status" value="1"/>
</dbReference>
<dbReference type="InterPro" id="IPR050144">
    <property type="entry name" value="AAE_transporter"/>
</dbReference>
<dbReference type="InterPro" id="IPR006037">
    <property type="entry name" value="RCK_C"/>
</dbReference>
<dbReference type="InterPro" id="IPR036721">
    <property type="entry name" value="RCK_C_sf"/>
</dbReference>
<dbReference type="InterPro" id="IPR023018">
    <property type="entry name" value="Transpt_YidE_put"/>
</dbReference>
<dbReference type="InterPro" id="IPR006512">
    <property type="entry name" value="YidE_YbjL"/>
</dbReference>
<dbReference type="NCBIfam" id="NF003007">
    <property type="entry name" value="PRK03818.1"/>
    <property type="match status" value="1"/>
</dbReference>
<dbReference type="NCBIfam" id="TIGR01625">
    <property type="entry name" value="YidE_YbjL_dupl"/>
    <property type="match status" value="2"/>
</dbReference>
<dbReference type="PANTHER" id="PTHR30445">
    <property type="entry name" value="K(+)_H(+) ANTIPORTER SUBUNIT KHTT"/>
    <property type="match status" value="1"/>
</dbReference>
<dbReference type="PANTHER" id="PTHR30445:SF3">
    <property type="entry name" value="TRANSPORT PROTEIN YIDE-RELATED"/>
    <property type="match status" value="1"/>
</dbReference>
<dbReference type="Pfam" id="PF06826">
    <property type="entry name" value="Asp-Al_Ex"/>
    <property type="match status" value="2"/>
</dbReference>
<dbReference type="Pfam" id="PF02080">
    <property type="entry name" value="TrkA_C"/>
    <property type="match status" value="1"/>
</dbReference>
<dbReference type="SUPFAM" id="SSF116726">
    <property type="entry name" value="TrkA C-terminal domain-like"/>
    <property type="match status" value="2"/>
</dbReference>
<dbReference type="PROSITE" id="PS51202">
    <property type="entry name" value="RCK_C"/>
    <property type="match status" value="2"/>
</dbReference>
<accession>B0URX9</accession>
<reference key="1">
    <citation type="submission" date="2008-02" db="EMBL/GenBank/DDBJ databases">
        <title>Complete sequence of Haemophilus somnus 2336.</title>
        <authorList>
            <consortium name="US DOE Joint Genome Institute"/>
            <person name="Siddaramappa S."/>
            <person name="Duncan A.J."/>
            <person name="Challacombe J.F."/>
            <person name="Rainey D."/>
            <person name="Gillaspy A.F."/>
            <person name="Carson M."/>
            <person name="Gipson J."/>
            <person name="Gipson M."/>
            <person name="Bruce D."/>
            <person name="Detter J.C."/>
            <person name="Han C.S."/>
            <person name="Land M."/>
            <person name="Tapia R."/>
            <person name="Thompson L.S."/>
            <person name="Orvis J."/>
            <person name="Zaitshik J."/>
            <person name="Barnes G."/>
            <person name="Brettin T.S."/>
            <person name="Dyer D.W."/>
            <person name="Inzana T.J."/>
        </authorList>
    </citation>
    <scope>NUCLEOTIDE SEQUENCE [LARGE SCALE GENOMIC DNA]</scope>
    <source>
        <strain>2336</strain>
    </source>
</reference>
<sequence>MSDIAITICILALVAVIGLWIGHWKIRGVGLGIGGVLFGGIIVAHFMNQNGLKLDAHTLHFIQEFGLILFVYTIGIQVGPGFFASLLSAGLKLNGLATLIVVLGAVSVFVLYKVVNVDLDIILGIYSGAVTNTPSLGAGQQILTELGIENANSTMGMAYAMAYPFGICGILLSMWLIRLFFKIKVEEEEKQFQKASGQDKESLTTVNVKVTNPNLSGLRLIDIPGFDNKDVVCSRLKRQENISVPSADTIIAIDDVLHLVGEINALKKMKLVIGEEIDMPMTHLAGDLRSERIVVTNEKVLGKRIKHLGIHKKYGVVISRLNRAGVELVPTANTALQFGDVLHIVGRSDTIGNATSIIGNAQQKLQQVQMLPVFIGIGLGVLLGSIPFYIPGFPVALKLGLAGGPLVVALILARIGSVGKLYWFMPPSANLALREIGIVLFLAVVGLKSGGGFVDTLVNGQGLEWMGYGMFITFIPLMITGIIARLYMKLNYLSLCGLLAGSMTDPPALAFANAIKEDSGIAALSYATVYPLSMFLRIMSPQLLAILLWTAM</sequence>
<comment type="subcellular location">
    <subcellularLocation>
        <location evidence="1">Cell membrane</location>
        <topology evidence="1">Multi-pass membrane protein</topology>
    </subcellularLocation>
</comment>
<comment type="similarity">
    <text evidence="1">Belongs to the AAE transporter (TC 2.A.81) family. YidE subfamily.</text>
</comment>
<gene>
    <name type="ordered locus">HSM_0534</name>
</gene>
<evidence type="ECO:0000255" key="1">
    <source>
        <dbReference type="HAMAP-Rule" id="MF_01016"/>
    </source>
</evidence>
<feature type="chain" id="PRO_1000135211" description="Putative transport protein HSM_0534">
    <location>
        <begin position="1"/>
        <end position="552"/>
    </location>
</feature>
<feature type="transmembrane region" description="Helical" evidence="1">
    <location>
        <begin position="4"/>
        <end position="24"/>
    </location>
</feature>
<feature type="transmembrane region" description="Helical" evidence="1">
    <location>
        <begin position="28"/>
        <end position="48"/>
    </location>
</feature>
<feature type="transmembrane region" description="Helical" evidence="1">
    <location>
        <begin position="67"/>
        <end position="87"/>
    </location>
</feature>
<feature type="transmembrane region" description="Helical" evidence="1">
    <location>
        <begin position="95"/>
        <end position="115"/>
    </location>
</feature>
<feature type="transmembrane region" description="Helical" evidence="1">
    <location>
        <begin position="157"/>
        <end position="177"/>
    </location>
</feature>
<feature type="transmembrane region" description="Helical" evidence="1">
    <location>
        <begin position="370"/>
        <end position="390"/>
    </location>
</feature>
<feature type="transmembrane region" description="Helical" evidence="1">
    <location>
        <begin position="402"/>
        <end position="424"/>
    </location>
</feature>
<feature type="transmembrane region" description="Helical" evidence="1">
    <location>
        <begin position="438"/>
        <end position="458"/>
    </location>
</feature>
<feature type="transmembrane region" description="Helical" evidence="1">
    <location>
        <begin position="463"/>
        <end position="483"/>
    </location>
</feature>
<feature type="transmembrane region" description="Helical" evidence="1">
    <location>
        <begin position="495"/>
        <end position="515"/>
    </location>
</feature>
<feature type="transmembrane region" description="Helical" evidence="1">
    <location>
        <begin position="529"/>
        <end position="549"/>
    </location>
</feature>
<feature type="domain" description="RCK C-terminal 1" evidence="1">
    <location>
        <begin position="190"/>
        <end position="275"/>
    </location>
</feature>
<feature type="domain" description="RCK C-terminal 2" evidence="1">
    <location>
        <begin position="277"/>
        <end position="360"/>
    </location>
</feature>
<protein>
    <recommendedName>
        <fullName evidence="1">Putative transport protein HSM_0534</fullName>
    </recommendedName>
</protein>
<proteinExistence type="inferred from homology"/>
<organism>
    <name type="scientific">Histophilus somni (strain 2336)</name>
    <name type="common">Haemophilus somnus</name>
    <dbReference type="NCBI Taxonomy" id="228400"/>
    <lineage>
        <taxon>Bacteria</taxon>
        <taxon>Pseudomonadati</taxon>
        <taxon>Pseudomonadota</taxon>
        <taxon>Gammaproteobacteria</taxon>
        <taxon>Pasteurellales</taxon>
        <taxon>Pasteurellaceae</taxon>
        <taxon>Histophilus</taxon>
    </lineage>
</organism>
<keyword id="KW-1003">Cell membrane</keyword>
<keyword id="KW-0472">Membrane</keyword>
<keyword id="KW-0677">Repeat</keyword>
<keyword id="KW-0812">Transmembrane</keyword>
<keyword id="KW-1133">Transmembrane helix</keyword>
<keyword id="KW-0813">Transport</keyword>
<name>Y534_HISS2</name>